<keyword id="KW-0687">Ribonucleoprotein</keyword>
<keyword id="KW-0689">Ribosomal protein</keyword>
<keyword id="KW-0694">RNA-binding</keyword>
<keyword id="KW-0699">rRNA-binding</keyword>
<dbReference type="EMBL" id="AM421808">
    <property type="protein sequence ID" value="CAM09457.1"/>
    <property type="molecule type" value="Genomic_DNA"/>
</dbReference>
<dbReference type="RefSeq" id="WP_002215427.1">
    <property type="nucleotide sequence ID" value="NC_008767.1"/>
</dbReference>
<dbReference type="SMR" id="A1KRH9"/>
<dbReference type="GeneID" id="93387223"/>
<dbReference type="KEGG" id="nmc:NMC0138"/>
<dbReference type="HOGENOM" id="CLU_058591_0_2_4"/>
<dbReference type="Proteomes" id="UP000002286">
    <property type="component" value="Chromosome"/>
</dbReference>
<dbReference type="GO" id="GO:0022627">
    <property type="term" value="C:cytosolic small ribosomal subunit"/>
    <property type="evidence" value="ECO:0007669"/>
    <property type="project" value="TreeGrafter"/>
</dbReference>
<dbReference type="GO" id="GO:0003729">
    <property type="term" value="F:mRNA binding"/>
    <property type="evidence" value="ECO:0007669"/>
    <property type="project" value="UniProtKB-UniRule"/>
</dbReference>
<dbReference type="GO" id="GO:0019843">
    <property type="term" value="F:rRNA binding"/>
    <property type="evidence" value="ECO:0007669"/>
    <property type="project" value="UniProtKB-UniRule"/>
</dbReference>
<dbReference type="GO" id="GO:0003735">
    <property type="term" value="F:structural constituent of ribosome"/>
    <property type="evidence" value="ECO:0007669"/>
    <property type="project" value="InterPro"/>
</dbReference>
<dbReference type="GO" id="GO:0006412">
    <property type="term" value="P:translation"/>
    <property type="evidence" value="ECO:0007669"/>
    <property type="project" value="UniProtKB-UniRule"/>
</dbReference>
<dbReference type="CDD" id="cd02412">
    <property type="entry name" value="KH-II_30S_S3"/>
    <property type="match status" value="1"/>
</dbReference>
<dbReference type="FunFam" id="3.30.1140.32:FF:000006">
    <property type="entry name" value="30S ribosomal protein S3"/>
    <property type="match status" value="1"/>
</dbReference>
<dbReference type="FunFam" id="3.30.300.20:FF:000001">
    <property type="entry name" value="30S ribosomal protein S3"/>
    <property type="match status" value="1"/>
</dbReference>
<dbReference type="Gene3D" id="3.30.300.20">
    <property type="match status" value="1"/>
</dbReference>
<dbReference type="Gene3D" id="3.30.1140.32">
    <property type="entry name" value="Ribosomal protein S3, C-terminal domain"/>
    <property type="match status" value="1"/>
</dbReference>
<dbReference type="HAMAP" id="MF_01309_B">
    <property type="entry name" value="Ribosomal_uS3_B"/>
    <property type="match status" value="1"/>
</dbReference>
<dbReference type="InterPro" id="IPR004087">
    <property type="entry name" value="KH_dom"/>
</dbReference>
<dbReference type="InterPro" id="IPR015946">
    <property type="entry name" value="KH_dom-like_a/b"/>
</dbReference>
<dbReference type="InterPro" id="IPR004044">
    <property type="entry name" value="KH_dom_type_2"/>
</dbReference>
<dbReference type="InterPro" id="IPR009019">
    <property type="entry name" value="KH_sf_prok-type"/>
</dbReference>
<dbReference type="InterPro" id="IPR036419">
    <property type="entry name" value="Ribosomal_S3_C_sf"/>
</dbReference>
<dbReference type="InterPro" id="IPR005704">
    <property type="entry name" value="Ribosomal_uS3_bac-typ"/>
</dbReference>
<dbReference type="InterPro" id="IPR001351">
    <property type="entry name" value="Ribosomal_uS3_C"/>
</dbReference>
<dbReference type="InterPro" id="IPR018280">
    <property type="entry name" value="Ribosomal_uS3_CS"/>
</dbReference>
<dbReference type="NCBIfam" id="TIGR01009">
    <property type="entry name" value="rpsC_bact"/>
    <property type="match status" value="1"/>
</dbReference>
<dbReference type="PANTHER" id="PTHR11760">
    <property type="entry name" value="30S/40S RIBOSOMAL PROTEIN S3"/>
    <property type="match status" value="1"/>
</dbReference>
<dbReference type="PANTHER" id="PTHR11760:SF19">
    <property type="entry name" value="SMALL RIBOSOMAL SUBUNIT PROTEIN US3C"/>
    <property type="match status" value="1"/>
</dbReference>
<dbReference type="Pfam" id="PF07650">
    <property type="entry name" value="KH_2"/>
    <property type="match status" value="1"/>
</dbReference>
<dbReference type="Pfam" id="PF00189">
    <property type="entry name" value="Ribosomal_S3_C"/>
    <property type="match status" value="1"/>
</dbReference>
<dbReference type="SMART" id="SM00322">
    <property type="entry name" value="KH"/>
    <property type="match status" value="1"/>
</dbReference>
<dbReference type="SUPFAM" id="SSF54814">
    <property type="entry name" value="Prokaryotic type KH domain (KH-domain type II)"/>
    <property type="match status" value="1"/>
</dbReference>
<dbReference type="SUPFAM" id="SSF54821">
    <property type="entry name" value="Ribosomal protein S3 C-terminal domain"/>
    <property type="match status" value="1"/>
</dbReference>
<dbReference type="PROSITE" id="PS50823">
    <property type="entry name" value="KH_TYPE_2"/>
    <property type="match status" value="1"/>
</dbReference>
<dbReference type="PROSITE" id="PS00548">
    <property type="entry name" value="RIBOSOMAL_S3"/>
    <property type="match status" value="1"/>
</dbReference>
<sequence length="230" mass="25798">MGQKINPTGFRLAVTKDWASKWFAKSTDFSTVLKQDIDVRNYLRQKLANASVGRVVIERPAKSARITIHSARPGVVIGKKGEDIEVLKRDLQVLMGVPVHVNIEEIRRPELDAQIIADGIAQQLEKRVQFRRAMKRAMQNAMRSGAKGIKIMTSGRLNGADIARSEWYREGRVPLHTLRANVDYATSEAHTTYGVLGLKVWVYTEGNIKSSKPEHESKQRKAGRRNAAAN</sequence>
<organism>
    <name type="scientific">Neisseria meningitidis serogroup C / serotype 2a (strain ATCC 700532 / DSM 15464 / FAM18)</name>
    <dbReference type="NCBI Taxonomy" id="272831"/>
    <lineage>
        <taxon>Bacteria</taxon>
        <taxon>Pseudomonadati</taxon>
        <taxon>Pseudomonadota</taxon>
        <taxon>Betaproteobacteria</taxon>
        <taxon>Neisseriales</taxon>
        <taxon>Neisseriaceae</taxon>
        <taxon>Neisseria</taxon>
    </lineage>
</organism>
<name>RS3_NEIMF</name>
<gene>
    <name evidence="1" type="primary">rpsC</name>
    <name type="ordered locus">NMC0138</name>
</gene>
<evidence type="ECO:0000255" key="1">
    <source>
        <dbReference type="HAMAP-Rule" id="MF_01309"/>
    </source>
</evidence>
<evidence type="ECO:0000256" key="2">
    <source>
        <dbReference type="SAM" id="MobiDB-lite"/>
    </source>
</evidence>
<evidence type="ECO:0000305" key="3"/>
<protein>
    <recommendedName>
        <fullName evidence="1">Small ribosomal subunit protein uS3</fullName>
    </recommendedName>
    <alternativeName>
        <fullName evidence="3">30S ribosomal protein S3</fullName>
    </alternativeName>
</protein>
<reference key="1">
    <citation type="journal article" date="2007" name="PLoS Genet.">
        <title>Meningococcal genetic variation mechanisms viewed through comparative analysis of serogroup C strain FAM18.</title>
        <authorList>
            <person name="Bentley S.D."/>
            <person name="Vernikos G.S."/>
            <person name="Snyder L.A.S."/>
            <person name="Churcher C."/>
            <person name="Arrowsmith C."/>
            <person name="Chillingworth T."/>
            <person name="Cronin A."/>
            <person name="Davis P.H."/>
            <person name="Holroyd N.E."/>
            <person name="Jagels K."/>
            <person name="Maddison M."/>
            <person name="Moule S."/>
            <person name="Rabbinowitsch E."/>
            <person name="Sharp S."/>
            <person name="Unwin L."/>
            <person name="Whitehead S."/>
            <person name="Quail M.A."/>
            <person name="Achtman M."/>
            <person name="Barrell B.G."/>
            <person name="Saunders N.J."/>
            <person name="Parkhill J."/>
        </authorList>
    </citation>
    <scope>NUCLEOTIDE SEQUENCE [LARGE SCALE GENOMIC DNA]</scope>
    <source>
        <strain>ATCC 700532 / DSM 15464 / FAM18</strain>
    </source>
</reference>
<comment type="function">
    <text evidence="1">Binds the lower part of the 30S subunit head. Binds mRNA in the 70S ribosome, positioning it for translation.</text>
</comment>
<comment type="subunit">
    <text evidence="1">Part of the 30S ribosomal subunit. Forms a tight complex with proteins S10 and S14.</text>
</comment>
<comment type="similarity">
    <text evidence="1">Belongs to the universal ribosomal protein uS3 family.</text>
</comment>
<accession>A1KRH9</accession>
<feature type="chain" id="PRO_0000293838" description="Small ribosomal subunit protein uS3">
    <location>
        <begin position="1"/>
        <end position="230"/>
    </location>
</feature>
<feature type="domain" description="KH type-2" evidence="1">
    <location>
        <begin position="39"/>
        <end position="107"/>
    </location>
</feature>
<feature type="region of interest" description="Disordered" evidence="2">
    <location>
        <begin position="210"/>
        <end position="230"/>
    </location>
</feature>
<proteinExistence type="inferred from homology"/>